<reference key="1">
    <citation type="journal article" date="2005" name="DNA Res.">
        <title>Complete genome sequence of the facultative anaerobic magnetotactic bacterium Magnetospirillum sp. strain AMB-1.</title>
        <authorList>
            <person name="Matsunaga T."/>
            <person name="Okamura Y."/>
            <person name="Fukuda Y."/>
            <person name="Wahyudi A.T."/>
            <person name="Murase Y."/>
            <person name="Takeyama H."/>
        </authorList>
    </citation>
    <scope>NUCLEOTIDE SEQUENCE [LARGE SCALE GENOMIC DNA]</scope>
    <source>
        <strain>ATCC 700264 / AMB-1</strain>
    </source>
</reference>
<keyword id="KW-0240">DNA-directed RNA polymerase</keyword>
<keyword id="KW-0548">Nucleotidyltransferase</keyword>
<keyword id="KW-0804">Transcription</keyword>
<keyword id="KW-0808">Transferase</keyword>
<proteinExistence type="inferred from homology"/>
<evidence type="ECO:0000255" key="1">
    <source>
        <dbReference type="HAMAP-Rule" id="MF_00366"/>
    </source>
</evidence>
<comment type="function">
    <text evidence="1">Promotes RNA polymerase assembly. Latches the N- and C-terminal regions of the beta' subunit thereby facilitating its interaction with the beta and alpha subunits.</text>
</comment>
<comment type="catalytic activity">
    <reaction evidence="1">
        <text>RNA(n) + a ribonucleoside 5'-triphosphate = RNA(n+1) + diphosphate</text>
        <dbReference type="Rhea" id="RHEA:21248"/>
        <dbReference type="Rhea" id="RHEA-COMP:14527"/>
        <dbReference type="Rhea" id="RHEA-COMP:17342"/>
        <dbReference type="ChEBI" id="CHEBI:33019"/>
        <dbReference type="ChEBI" id="CHEBI:61557"/>
        <dbReference type="ChEBI" id="CHEBI:140395"/>
        <dbReference type="EC" id="2.7.7.6"/>
    </reaction>
</comment>
<comment type="subunit">
    <text evidence="1">The RNAP catalytic core consists of 2 alpha, 1 beta, 1 beta' and 1 omega subunit. When a sigma factor is associated with the core the holoenzyme is formed, which can initiate transcription.</text>
</comment>
<comment type="similarity">
    <text evidence="1">Belongs to the RNA polymerase subunit omega family.</text>
</comment>
<name>RPOZ_PARM1</name>
<sequence>MARVTVEDCVLKVPNRFELVLIAGQRARDISAGAKLTVERDNDKNPVVALREIADDTVPLDALQNALIQNLQKHVEVDEPEEDEMEGFIADRDLAFENVANEDEMIEDGMSINDTGADFDVDSGDE</sequence>
<dbReference type="EC" id="2.7.7.6" evidence="1"/>
<dbReference type="EMBL" id="AP007255">
    <property type="protein sequence ID" value="BAE51056.1"/>
    <property type="molecule type" value="Genomic_DNA"/>
</dbReference>
<dbReference type="RefSeq" id="WP_011384650.1">
    <property type="nucleotide sequence ID" value="NC_007626.1"/>
</dbReference>
<dbReference type="SMR" id="Q2W519"/>
<dbReference type="STRING" id="342108.amb2252"/>
<dbReference type="KEGG" id="mag:amb2252"/>
<dbReference type="HOGENOM" id="CLU_125406_2_0_5"/>
<dbReference type="OrthoDB" id="9796300at2"/>
<dbReference type="Proteomes" id="UP000007058">
    <property type="component" value="Chromosome"/>
</dbReference>
<dbReference type="GO" id="GO:0000428">
    <property type="term" value="C:DNA-directed RNA polymerase complex"/>
    <property type="evidence" value="ECO:0007669"/>
    <property type="project" value="UniProtKB-KW"/>
</dbReference>
<dbReference type="GO" id="GO:0003677">
    <property type="term" value="F:DNA binding"/>
    <property type="evidence" value="ECO:0007669"/>
    <property type="project" value="UniProtKB-UniRule"/>
</dbReference>
<dbReference type="GO" id="GO:0003899">
    <property type="term" value="F:DNA-directed RNA polymerase activity"/>
    <property type="evidence" value="ECO:0007669"/>
    <property type="project" value="UniProtKB-UniRule"/>
</dbReference>
<dbReference type="GO" id="GO:0006351">
    <property type="term" value="P:DNA-templated transcription"/>
    <property type="evidence" value="ECO:0007669"/>
    <property type="project" value="UniProtKB-UniRule"/>
</dbReference>
<dbReference type="Gene3D" id="3.90.940.10">
    <property type="match status" value="1"/>
</dbReference>
<dbReference type="HAMAP" id="MF_00366">
    <property type="entry name" value="RNApol_bact_RpoZ"/>
    <property type="match status" value="1"/>
</dbReference>
<dbReference type="InterPro" id="IPR003716">
    <property type="entry name" value="DNA-dir_RNA_pol_omega"/>
</dbReference>
<dbReference type="InterPro" id="IPR006110">
    <property type="entry name" value="Pol_omega/Rpo6/RPB6"/>
</dbReference>
<dbReference type="InterPro" id="IPR036161">
    <property type="entry name" value="RPB6/omega-like_sf"/>
</dbReference>
<dbReference type="NCBIfam" id="TIGR00690">
    <property type="entry name" value="rpoZ"/>
    <property type="match status" value="1"/>
</dbReference>
<dbReference type="PANTHER" id="PTHR34476">
    <property type="entry name" value="DNA-DIRECTED RNA POLYMERASE SUBUNIT OMEGA"/>
    <property type="match status" value="1"/>
</dbReference>
<dbReference type="PANTHER" id="PTHR34476:SF1">
    <property type="entry name" value="DNA-DIRECTED RNA POLYMERASE SUBUNIT OMEGA"/>
    <property type="match status" value="1"/>
</dbReference>
<dbReference type="Pfam" id="PF01192">
    <property type="entry name" value="RNA_pol_Rpb6"/>
    <property type="match status" value="1"/>
</dbReference>
<dbReference type="SMART" id="SM01409">
    <property type="entry name" value="RNA_pol_Rpb6"/>
    <property type="match status" value="1"/>
</dbReference>
<dbReference type="SUPFAM" id="SSF63562">
    <property type="entry name" value="RPB6/omega subunit-like"/>
    <property type="match status" value="1"/>
</dbReference>
<organism>
    <name type="scientific">Paramagnetospirillum magneticum (strain ATCC 700264 / AMB-1)</name>
    <name type="common">Magnetospirillum magneticum</name>
    <dbReference type="NCBI Taxonomy" id="342108"/>
    <lineage>
        <taxon>Bacteria</taxon>
        <taxon>Pseudomonadati</taxon>
        <taxon>Pseudomonadota</taxon>
        <taxon>Alphaproteobacteria</taxon>
        <taxon>Rhodospirillales</taxon>
        <taxon>Magnetospirillaceae</taxon>
        <taxon>Paramagnetospirillum</taxon>
    </lineage>
</organism>
<feature type="chain" id="PRO_0000237472" description="DNA-directed RNA polymerase subunit omega">
    <location>
        <begin position="1"/>
        <end position="126"/>
    </location>
</feature>
<accession>Q2W519</accession>
<gene>
    <name evidence="1" type="primary">rpoZ</name>
    <name type="ordered locus">amb2252</name>
</gene>
<protein>
    <recommendedName>
        <fullName evidence="1">DNA-directed RNA polymerase subunit omega</fullName>
        <shortName evidence="1">RNAP omega subunit</shortName>
        <ecNumber evidence="1">2.7.7.6</ecNumber>
    </recommendedName>
    <alternativeName>
        <fullName evidence="1">RNA polymerase omega subunit</fullName>
    </alternativeName>
    <alternativeName>
        <fullName evidence="1">Transcriptase subunit omega</fullName>
    </alternativeName>
</protein>